<protein>
    <recommendedName>
        <fullName>Interleukin-5</fullName>
        <shortName>IL-5</shortName>
    </recommendedName>
    <alternativeName>
        <fullName>Eosinophil differentiation factor</fullName>
    </alternativeName>
    <alternativeName>
        <fullName>T-cell replacing factor</fullName>
        <shortName>TRF</shortName>
    </alternativeName>
</protein>
<comment type="function">
    <text evidence="2 3">Homodimeric cytokine expressed predominantly by T-lymphocytes and NK cells that plays an important role in the survival, differentiation, and chemotaxis of eosinophils. Also acts on activated and resting B-cells to induce immunoglobulin production, growth, and differentiation (By similarity). Mechanistically, exerts its biological effects through a receptor composed of IL5RA subunit and the cytokine receptor common subunit beta/CSF2RB. Binding to the receptor leads to activation of various kinases including LYN, SYK and JAK2 and thereby propagates signals through the RAS-MAPK and JAK-STAT5 pathways respectively (By similarity).</text>
</comment>
<comment type="subunit">
    <text evidence="2 3">Homodimer; disulfide-linked. Interacts with IL5RA. Interacts with CSF2RB.</text>
</comment>
<comment type="subcellular location">
    <subcellularLocation>
        <location evidence="2">Secreted</location>
    </subcellularLocation>
</comment>
<comment type="similarity">
    <text evidence="5">Belongs to the IL-5 family.</text>
</comment>
<keyword id="KW-0202">Cytokine</keyword>
<keyword id="KW-1015">Disulfide bond</keyword>
<keyword id="KW-0325">Glycoprotein</keyword>
<keyword id="KW-0339">Growth factor</keyword>
<keyword id="KW-0964">Secreted</keyword>
<keyword id="KW-0732">Signal</keyword>
<proteinExistence type="inferred from homology"/>
<sequence length="139" mass="15784">MMKILVCLPLLTLYAGCVYGIATGNPVSRLVTETLSLITAHRTLLIGNGTLRISIPDPQNHPLCIEEIFQGIETLKNQTAEENVVEKIFQNLSSLKGYITAKEKQCGGERRRVEQFLDYLEEFLRTINIEWNTEWTVES</sequence>
<reference key="1">
    <citation type="journal article" date="1999" name="Immunogenetics">
        <title>Isolation and characterization of marsupial IL5 genes.</title>
        <authorList>
            <person name="Hawken R.J."/>
            <person name="Maccarone P."/>
            <person name="Toder R."/>
            <person name="Marshall Graves J.A."/>
            <person name="Maddox J.F."/>
        </authorList>
    </citation>
    <scope>NUCLEOTIDE SEQUENCE [GENOMIC DNA]</scope>
</reference>
<gene>
    <name type="primary">IL5</name>
</gene>
<feature type="signal peptide" evidence="1">
    <location>
        <begin position="1"/>
        <end position="19"/>
    </location>
</feature>
<feature type="chain" id="PRO_0000015561" description="Interleukin-5">
    <location>
        <begin position="20"/>
        <end position="139"/>
    </location>
</feature>
<feature type="glycosylation site" description="N-linked (GlcNAc...) asparagine" evidence="4">
    <location>
        <position position="48"/>
    </location>
</feature>
<feature type="glycosylation site" description="N-linked (GlcNAc...) asparagine" evidence="4">
    <location>
        <position position="77"/>
    </location>
</feature>
<feature type="glycosylation site" description="N-linked (GlcNAc...) asparagine" evidence="4">
    <location>
        <position position="91"/>
    </location>
</feature>
<feature type="disulfide bond" description="Interchain (with C-106)" evidence="1">
    <location>
        <position position="64"/>
    </location>
</feature>
<feature type="disulfide bond" description="Interchain (with C-64)" evidence="1">
    <location>
        <position position="106"/>
    </location>
</feature>
<dbReference type="EMBL" id="AF064209">
    <property type="protein sequence ID" value="AAD37462.1"/>
    <property type="molecule type" value="Genomic_DNA"/>
</dbReference>
<dbReference type="SMR" id="Q9XT91"/>
<dbReference type="GlyCosmos" id="Q9XT91">
    <property type="glycosylation" value="3 sites, No reported glycans"/>
</dbReference>
<dbReference type="HOGENOM" id="CLU_156269_1_0_1"/>
<dbReference type="TreeFam" id="TF338422"/>
<dbReference type="GO" id="GO:0005615">
    <property type="term" value="C:extracellular space"/>
    <property type="evidence" value="ECO:0007669"/>
    <property type="project" value="UniProtKB-KW"/>
</dbReference>
<dbReference type="GO" id="GO:0005125">
    <property type="term" value="F:cytokine activity"/>
    <property type="evidence" value="ECO:0007669"/>
    <property type="project" value="UniProtKB-KW"/>
</dbReference>
<dbReference type="GO" id="GO:0008083">
    <property type="term" value="F:growth factor activity"/>
    <property type="evidence" value="ECO:0007669"/>
    <property type="project" value="UniProtKB-KW"/>
</dbReference>
<dbReference type="GO" id="GO:0005137">
    <property type="term" value="F:interleukin-5 receptor binding"/>
    <property type="evidence" value="ECO:0007669"/>
    <property type="project" value="InterPro"/>
</dbReference>
<dbReference type="GO" id="GO:0006955">
    <property type="term" value="P:immune response"/>
    <property type="evidence" value="ECO:0007669"/>
    <property type="project" value="InterPro"/>
</dbReference>
<dbReference type="Gene3D" id="1.20.1250.10">
    <property type="match status" value="1"/>
</dbReference>
<dbReference type="InterPro" id="IPR009079">
    <property type="entry name" value="4_helix_cytokine-like_core"/>
</dbReference>
<dbReference type="InterPro" id="IPR000186">
    <property type="entry name" value="IL-5"/>
</dbReference>
<dbReference type="PANTHER" id="PTHR48491">
    <property type="entry name" value="INTERLEUKIN-5"/>
    <property type="match status" value="1"/>
</dbReference>
<dbReference type="PANTHER" id="PTHR48491:SF1">
    <property type="entry name" value="INTERLEUKIN-5"/>
    <property type="match status" value="1"/>
</dbReference>
<dbReference type="Pfam" id="PF02025">
    <property type="entry name" value="IL5"/>
    <property type="match status" value="1"/>
</dbReference>
<dbReference type="PRINTS" id="PR00432">
    <property type="entry name" value="INTERLEUKIN5"/>
</dbReference>
<dbReference type="SUPFAM" id="SSF47266">
    <property type="entry name" value="4-helical cytokines"/>
    <property type="match status" value="1"/>
</dbReference>
<organism>
    <name type="scientific">Notamacropus eugenii</name>
    <name type="common">Tammar wallaby</name>
    <name type="synonym">Macropus eugenii</name>
    <dbReference type="NCBI Taxonomy" id="9315"/>
    <lineage>
        <taxon>Eukaryota</taxon>
        <taxon>Metazoa</taxon>
        <taxon>Chordata</taxon>
        <taxon>Craniata</taxon>
        <taxon>Vertebrata</taxon>
        <taxon>Euteleostomi</taxon>
        <taxon>Mammalia</taxon>
        <taxon>Metatheria</taxon>
        <taxon>Diprotodontia</taxon>
        <taxon>Macropodidae</taxon>
        <taxon>Notamacropus</taxon>
    </lineage>
</organism>
<evidence type="ECO:0000250" key="1"/>
<evidence type="ECO:0000250" key="2">
    <source>
        <dbReference type="UniProtKB" id="P04401"/>
    </source>
</evidence>
<evidence type="ECO:0000250" key="3">
    <source>
        <dbReference type="UniProtKB" id="P05113"/>
    </source>
</evidence>
<evidence type="ECO:0000255" key="4"/>
<evidence type="ECO:0000305" key="5"/>
<name>IL5_NOTEU</name>
<accession>Q9XT91</accession>